<feature type="chain" id="PRO_0000108207" description="Uncharacterized transporter MTH_841">
    <location>
        <begin position="1"/>
        <end position="343"/>
    </location>
</feature>
<feature type="transmembrane region" description="Helical" evidence="1">
    <location>
        <begin position="13"/>
        <end position="33"/>
    </location>
</feature>
<feature type="transmembrane region" description="Helical" evidence="1">
    <location>
        <begin position="44"/>
        <end position="64"/>
    </location>
</feature>
<feature type="transmembrane region" description="Helical" evidence="1">
    <location>
        <begin position="71"/>
        <end position="91"/>
    </location>
</feature>
<feature type="transmembrane region" description="Helical" evidence="1">
    <location>
        <begin position="121"/>
        <end position="141"/>
    </location>
</feature>
<feature type="transmembrane region" description="Helical" evidence="1">
    <location>
        <begin position="148"/>
        <end position="168"/>
    </location>
</feature>
<feature type="transmembrane region" description="Helical" evidence="1">
    <location>
        <begin position="177"/>
        <end position="197"/>
    </location>
</feature>
<feature type="transmembrane region" description="Helical" evidence="1">
    <location>
        <begin position="203"/>
        <end position="223"/>
    </location>
</feature>
<feature type="transmembrane region" description="Helical" evidence="1">
    <location>
        <begin position="244"/>
        <end position="264"/>
    </location>
</feature>
<feature type="transmembrane region" description="Helical" evidence="1">
    <location>
        <begin position="269"/>
        <end position="289"/>
    </location>
</feature>
<feature type="transmembrane region" description="Helical" evidence="1">
    <location>
        <begin position="296"/>
        <end position="316"/>
    </location>
</feature>
<feature type="transmembrane region" description="Helical" evidence="1">
    <location>
        <begin position="320"/>
        <end position="340"/>
    </location>
</feature>
<feature type="domain" description="EamA 1">
    <location>
        <begin position="55"/>
        <end position="192"/>
    </location>
</feature>
<feature type="domain" description="EamA 2">
    <location>
        <begin position="216"/>
        <end position="340"/>
    </location>
</feature>
<dbReference type="EMBL" id="AE000666">
    <property type="protein sequence ID" value="AAB85339.1"/>
    <property type="molecule type" value="Genomic_DNA"/>
</dbReference>
<dbReference type="PIR" id="C69212">
    <property type="entry name" value="C69212"/>
</dbReference>
<dbReference type="SMR" id="O26929"/>
<dbReference type="STRING" id="187420.MTH_841"/>
<dbReference type="PaxDb" id="187420-MTH_841"/>
<dbReference type="EnsemblBacteria" id="AAB85339">
    <property type="protein sequence ID" value="AAB85339"/>
    <property type="gene ID" value="MTH_841"/>
</dbReference>
<dbReference type="KEGG" id="mth:MTH_841"/>
<dbReference type="PATRIC" id="fig|187420.15.peg.824"/>
<dbReference type="HOGENOM" id="CLU_042632_1_0_2"/>
<dbReference type="InParanoid" id="O26929"/>
<dbReference type="Proteomes" id="UP000005223">
    <property type="component" value="Chromosome"/>
</dbReference>
<dbReference type="GO" id="GO:0005886">
    <property type="term" value="C:plasma membrane"/>
    <property type="evidence" value="ECO:0007669"/>
    <property type="project" value="UniProtKB-SubCell"/>
</dbReference>
<dbReference type="Gene3D" id="1.10.3730.20">
    <property type="match status" value="1"/>
</dbReference>
<dbReference type="InterPro" id="IPR050638">
    <property type="entry name" value="AA-Vitamin_Transporters"/>
</dbReference>
<dbReference type="InterPro" id="IPR000620">
    <property type="entry name" value="EamA_dom"/>
</dbReference>
<dbReference type="PANTHER" id="PTHR32322">
    <property type="entry name" value="INNER MEMBRANE TRANSPORTER"/>
    <property type="match status" value="1"/>
</dbReference>
<dbReference type="PANTHER" id="PTHR32322:SF18">
    <property type="entry name" value="S-ADENOSYLMETHIONINE_S-ADENOSYLHOMOCYSTEINE TRANSPORTER"/>
    <property type="match status" value="1"/>
</dbReference>
<dbReference type="Pfam" id="PF00892">
    <property type="entry name" value="EamA"/>
    <property type="match status" value="2"/>
</dbReference>
<dbReference type="SUPFAM" id="SSF103481">
    <property type="entry name" value="Multidrug resistance efflux transporter EmrE"/>
    <property type="match status" value="2"/>
</dbReference>
<gene>
    <name type="ordered locus">MTH_841</name>
</gene>
<organism>
    <name type="scientific">Methanothermobacter thermautotrophicus (strain ATCC 29096 / DSM 1053 / JCM 10044 / NBRC 100330 / Delta H)</name>
    <name type="common">Methanobacterium thermoautotrophicum</name>
    <dbReference type="NCBI Taxonomy" id="187420"/>
    <lineage>
        <taxon>Archaea</taxon>
        <taxon>Methanobacteriati</taxon>
        <taxon>Methanobacteriota</taxon>
        <taxon>Methanomada group</taxon>
        <taxon>Methanobacteria</taxon>
        <taxon>Methanobacteriales</taxon>
        <taxon>Methanobacteriaceae</taxon>
        <taxon>Methanothermobacter</taxon>
    </lineage>
</organism>
<accession>O26929</accession>
<evidence type="ECO:0000255" key="1"/>
<evidence type="ECO:0000305" key="2"/>
<sequence length="343" mass="37839">MLSYPGELQGCRVILYLVGHHLYLIPTTISMCGCPEEGAYMRRLWGYISIITATIFFGISATLDKIMLSSMHPVTIGAYTYIIAGIFLFFIRETPLREHVLNAINRKGESEARIKRNDYLILLLTALLSTVIAPLLFLTGLGDTTAVNASLILNVEVLFIILLGYLIFRETLQLKDFLGIVLIILGAVYLLTEGDFSTILRNVAVTGNFLVMAAAFFWSLDTVLSKFLSRKRDLIFISGVKSSVGGFVLLIIMLILGINTELPLEMLPYALGVSVFSIGCSFILIYIAIREIGASMVGALFPLSSLFGAIFAFIILREPFSIMQGISGIVMLTGVFILYWNGK</sequence>
<protein>
    <recommendedName>
        <fullName>Uncharacterized transporter MTH_841</fullName>
    </recommendedName>
</protein>
<keyword id="KW-1003">Cell membrane</keyword>
<keyword id="KW-0472">Membrane</keyword>
<keyword id="KW-1185">Reference proteome</keyword>
<keyword id="KW-0677">Repeat</keyword>
<keyword id="KW-0812">Transmembrane</keyword>
<keyword id="KW-1133">Transmembrane helix</keyword>
<keyword id="KW-0813">Transport</keyword>
<comment type="subcellular location">
    <subcellularLocation>
        <location evidence="2">Cell membrane</location>
        <topology evidence="2">Multi-pass membrane protein</topology>
    </subcellularLocation>
</comment>
<comment type="similarity">
    <text evidence="2">Belongs to the EamA transporter family.</text>
</comment>
<name>Y841_METTH</name>
<reference key="1">
    <citation type="journal article" date="1997" name="J. Bacteriol.">
        <title>Complete genome sequence of Methanobacterium thermoautotrophicum deltaH: functional analysis and comparative genomics.</title>
        <authorList>
            <person name="Smith D.R."/>
            <person name="Doucette-Stamm L.A."/>
            <person name="Deloughery C."/>
            <person name="Lee H.-M."/>
            <person name="Dubois J."/>
            <person name="Aldredge T."/>
            <person name="Bashirzadeh R."/>
            <person name="Blakely D."/>
            <person name="Cook R."/>
            <person name="Gilbert K."/>
            <person name="Harrison D."/>
            <person name="Hoang L."/>
            <person name="Keagle P."/>
            <person name="Lumm W."/>
            <person name="Pothier B."/>
            <person name="Qiu D."/>
            <person name="Spadafora R."/>
            <person name="Vicare R."/>
            <person name="Wang Y."/>
            <person name="Wierzbowski J."/>
            <person name="Gibson R."/>
            <person name="Jiwani N."/>
            <person name="Caruso A."/>
            <person name="Bush D."/>
            <person name="Safer H."/>
            <person name="Patwell D."/>
            <person name="Prabhakar S."/>
            <person name="McDougall S."/>
            <person name="Shimer G."/>
            <person name="Goyal A."/>
            <person name="Pietrovski S."/>
            <person name="Church G.M."/>
            <person name="Daniels C.J."/>
            <person name="Mao J.-I."/>
            <person name="Rice P."/>
            <person name="Noelling J."/>
            <person name="Reeve J.N."/>
        </authorList>
    </citation>
    <scope>NUCLEOTIDE SEQUENCE [LARGE SCALE GENOMIC DNA]</scope>
    <source>
        <strain>ATCC 29096 / DSM 1053 / JCM 10044 / NBRC 100330 / Delta H</strain>
    </source>
</reference>
<proteinExistence type="inferred from homology"/>